<name>RGP5_ARATH</name>
<feature type="chain" id="PRO_0000410988" description="Probable UDP-arabinopyranose mutase 5">
    <location>
        <begin position="1"/>
        <end position="348"/>
    </location>
</feature>
<feature type="short sequence motif" description="DXD motif" evidence="2">
    <location>
        <begin position="100"/>
        <end position="102"/>
    </location>
</feature>
<feature type="site" description="Required for activity" evidence="2">
    <location>
        <position position="148"/>
    </location>
</feature>
<feature type="site" description="Required for activity" evidence="2">
    <location>
        <position position="155"/>
    </location>
</feature>
<feature type="glycosylation site" description="N-linked (Glc...) arginine" evidence="1">
    <location>
        <position position="148"/>
    </location>
</feature>
<dbReference type="EC" id="5.4.99.30" evidence="3"/>
<dbReference type="EMBL" id="AB005242">
    <property type="protein sequence ID" value="BAB09620.1"/>
    <property type="molecule type" value="Genomic_DNA"/>
</dbReference>
<dbReference type="EMBL" id="CP002688">
    <property type="protein sequence ID" value="AED92302.1"/>
    <property type="molecule type" value="Genomic_DNA"/>
</dbReference>
<dbReference type="EMBL" id="CP002688">
    <property type="protein sequence ID" value="AED92303.1"/>
    <property type="molecule type" value="Genomic_DNA"/>
</dbReference>
<dbReference type="EMBL" id="AY091141">
    <property type="protein sequence ID" value="AAM14090.1"/>
    <property type="molecule type" value="mRNA"/>
</dbReference>
<dbReference type="EMBL" id="AY114087">
    <property type="protein sequence ID" value="AAM45135.1"/>
    <property type="molecule type" value="mRNA"/>
</dbReference>
<dbReference type="EMBL" id="AY088511">
    <property type="protein sequence ID" value="AAM66046.1"/>
    <property type="molecule type" value="mRNA"/>
</dbReference>
<dbReference type="RefSeq" id="NP_197155.1">
    <property type="nucleotide sequence ID" value="NM_121657.2"/>
</dbReference>
<dbReference type="RefSeq" id="NP_850831.1">
    <property type="nucleotide sequence ID" value="NM_180500.3"/>
</dbReference>
<dbReference type="SMR" id="Q9FFD2"/>
<dbReference type="BioGRID" id="16789">
    <property type="interactions" value="3"/>
</dbReference>
<dbReference type="FunCoup" id="Q9FFD2">
    <property type="interactions" value="1397"/>
</dbReference>
<dbReference type="IntAct" id="Q9FFD2">
    <property type="interactions" value="1"/>
</dbReference>
<dbReference type="STRING" id="3702.Q9FFD2"/>
<dbReference type="CAZy" id="GT75">
    <property type="family name" value="Glycosyltransferase Family 75"/>
</dbReference>
<dbReference type="GlyCosmos" id="Q9FFD2">
    <property type="glycosylation" value="1 site, No reported glycans"/>
</dbReference>
<dbReference type="iPTMnet" id="Q9FFD2"/>
<dbReference type="PaxDb" id="3702-AT5G16510.2"/>
<dbReference type="ProteomicsDB" id="236969"/>
<dbReference type="DNASU" id="831513"/>
<dbReference type="EnsemblPlants" id="AT5G16510.1">
    <property type="protein sequence ID" value="AT5G16510.1"/>
    <property type="gene ID" value="AT5G16510"/>
</dbReference>
<dbReference type="EnsemblPlants" id="AT5G16510.2">
    <property type="protein sequence ID" value="AT5G16510.2"/>
    <property type="gene ID" value="AT5G16510"/>
</dbReference>
<dbReference type="GeneID" id="831513"/>
<dbReference type="Gramene" id="AT5G16510.1">
    <property type="protein sequence ID" value="AT5G16510.1"/>
    <property type="gene ID" value="AT5G16510"/>
</dbReference>
<dbReference type="Gramene" id="AT5G16510.2">
    <property type="protein sequence ID" value="AT5G16510.2"/>
    <property type="gene ID" value="AT5G16510"/>
</dbReference>
<dbReference type="KEGG" id="ath:AT5G16510"/>
<dbReference type="Araport" id="AT5G16510"/>
<dbReference type="TAIR" id="AT5G16510">
    <property type="gene designation" value="RGP5"/>
</dbReference>
<dbReference type="eggNOG" id="ENOG502QRG2">
    <property type="taxonomic scope" value="Eukaryota"/>
</dbReference>
<dbReference type="HOGENOM" id="CLU_061976_0_0_1"/>
<dbReference type="InParanoid" id="Q9FFD2"/>
<dbReference type="OMA" id="VYTKSDM"/>
<dbReference type="OrthoDB" id="1020896at2759"/>
<dbReference type="PhylomeDB" id="Q9FFD2"/>
<dbReference type="BioCyc" id="ARA:AT5G16510-MONOMER"/>
<dbReference type="CD-CODE" id="4299E36E">
    <property type="entry name" value="Nucleolus"/>
</dbReference>
<dbReference type="PRO" id="PR:Q9FFD2"/>
<dbReference type="Proteomes" id="UP000006548">
    <property type="component" value="Chromosome 5"/>
</dbReference>
<dbReference type="ExpressionAtlas" id="Q9FFD2">
    <property type="expression patterns" value="baseline and differential"/>
</dbReference>
<dbReference type="GO" id="GO:0005829">
    <property type="term" value="C:cytosol"/>
    <property type="evidence" value="ECO:0000314"/>
    <property type="project" value="UniProtKB"/>
</dbReference>
<dbReference type="GO" id="GO:0005794">
    <property type="term" value="C:Golgi apparatus"/>
    <property type="evidence" value="ECO:0000314"/>
    <property type="project" value="UniProtKB"/>
</dbReference>
<dbReference type="GO" id="GO:0009506">
    <property type="term" value="C:plasmodesma"/>
    <property type="evidence" value="ECO:0007005"/>
    <property type="project" value="TAIR"/>
</dbReference>
<dbReference type="GO" id="GO:0009536">
    <property type="term" value="C:plastid"/>
    <property type="evidence" value="ECO:0007005"/>
    <property type="project" value="TAIR"/>
</dbReference>
<dbReference type="GO" id="GO:0016866">
    <property type="term" value="F:intramolecular transferase activity"/>
    <property type="evidence" value="ECO:0007669"/>
    <property type="project" value="InterPro"/>
</dbReference>
<dbReference type="GO" id="GO:0071555">
    <property type="term" value="P:cell wall organization"/>
    <property type="evidence" value="ECO:0007669"/>
    <property type="project" value="UniProtKB-KW"/>
</dbReference>
<dbReference type="GO" id="GO:0071669">
    <property type="term" value="P:plant-type cell wall organization or biogenesis"/>
    <property type="evidence" value="ECO:0007669"/>
    <property type="project" value="InterPro"/>
</dbReference>
<dbReference type="InterPro" id="IPR004901">
    <property type="entry name" value="RGP"/>
</dbReference>
<dbReference type="InterPro" id="IPR037595">
    <property type="entry name" value="RGP_fam"/>
</dbReference>
<dbReference type="PANTHER" id="PTHR31682:SF4">
    <property type="entry name" value="UDP-ARABINOPYRANOSE MUTASE 5-RELATED"/>
    <property type="match status" value="1"/>
</dbReference>
<dbReference type="PANTHER" id="PTHR31682">
    <property type="entry name" value="UDP-ARABINOSE MUTASE"/>
    <property type="match status" value="1"/>
</dbReference>
<dbReference type="Pfam" id="PF03214">
    <property type="entry name" value="RGP"/>
    <property type="match status" value="1"/>
</dbReference>
<dbReference type="PIRSF" id="PIRSF016429">
    <property type="entry name" value="UPTG"/>
    <property type="match status" value="1"/>
</dbReference>
<accession>Q9FFD2</accession>
<organism>
    <name type="scientific">Arabidopsis thaliana</name>
    <name type="common">Mouse-ear cress</name>
    <dbReference type="NCBI Taxonomy" id="3702"/>
    <lineage>
        <taxon>Eukaryota</taxon>
        <taxon>Viridiplantae</taxon>
        <taxon>Streptophyta</taxon>
        <taxon>Embryophyta</taxon>
        <taxon>Tracheophyta</taxon>
        <taxon>Spermatophyta</taxon>
        <taxon>Magnoliopsida</taxon>
        <taxon>eudicotyledons</taxon>
        <taxon>Gunneridae</taxon>
        <taxon>Pentapetalae</taxon>
        <taxon>rosids</taxon>
        <taxon>malvids</taxon>
        <taxon>Brassicales</taxon>
        <taxon>Brassicaceae</taxon>
        <taxon>Camelineae</taxon>
        <taxon>Arabidopsis</taxon>
    </lineage>
</organism>
<evidence type="ECO:0000250" key="1">
    <source>
        <dbReference type="UniProtKB" id="P80607"/>
    </source>
</evidence>
<evidence type="ECO:0000250" key="2">
    <source>
        <dbReference type="UniProtKB" id="Q8H8T0"/>
    </source>
</evidence>
<evidence type="ECO:0000250" key="3">
    <source>
        <dbReference type="UniProtKB" id="Q9SRT9"/>
    </source>
</evidence>
<evidence type="ECO:0000269" key="4">
    <source>
    </source>
</evidence>
<evidence type="ECO:0000303" key="5">
    <source>
    </source>
</evidence>
<evidence type="ECO:0000305" key="6"/>
<evidence type="ECO:0000312" key="7">
    <source>
        <dbReference type="Araport" id="AT5G16510"/>
    </source>
</evidence>
<evidence type="ECO:0000312" key="8">
    <source>
        <dbReference type="EMBL" id="BAB09620.1"/>
    </source>
</evidence>
<keyword id="KW-0961">Cell wall biogenesis/degradation</keyword>
<keyword id="KW-0963">Cytoplasm</keyword>
<keyword id="KW-0325">Glycoprotein</keyword>
<keyword id="KW-0333">Golgi apparatus</keyword>
<keyword id="KW-0413">Isomerase</keyword>
<keyword id="KW-1185">Reference proteome</keyword>
<proteinExistence type="evidence at protein level"/>
<reference key="1">
    <citation type="journal article" date="1997" name="DNA Res.">
        <title>Structural analysis of Arabidopsis thaliana chromosome 5. I. Sequence features of the 1.6 Mb regions covered by twenty physically assigned P1 clones.</title>
        <authorList>
            <person name="Sato S."/>
            <person name="Kotani H."/>
            <person name="Nakamura Y."/>
            <person name="Kaneko T."/>
            <person name="Asamizu E."/>
            <person name="Fukami M."/>
            <person name="Miyajima N."/>
            <person name="Tabata S."/>
        </authorList>
    </citation>
    <scope>NUCLEOTIDE SEQUENCE [LARGE SCALE GENOMIC DNA]</scope>
    <source>
        <strain>cv. Columbia</strain>
    </source>
</reference>
<reference key="2">
    <citation type="journal article" date="2017" name="Plant J.">
        <title>Araport11: a complete reannotation of the Arabidopsis thaliana reference genome.</title>
        <authorList>
            <person name="Cheng C.Y."/>
            <person name="Krishnakumar V."/>
            <person name="Chan A.P."/>
            <person name="Thibaud-Nissen F."/>
            <person name="Schobel S."/>
            <person name="Town C.D."/>
        </authorList>
    </citation>
    <scope>GENOME REANNOTATION</scope>
    <source>
        <strain>cv. Columbia</strain>
    </source>
</reference>
<reference key="3">
    <citation type="journal article" date="2003" name="Science">
        <title>Empirical analysis of transcriptional activity in the Arabidopsis genome.</title>
        <authorList>
            <person name="Yamada K."/>
            <person name="Lim J."/>
            <person name="Dale J.M."/>
            <person name="Chen H."/>
            <person name="Shinn P."/>
            <person name="Palm C.J."/>
            <person name="Southwick A.M."/>
            <person name="Wu H.C."/>
            <person name="Kim C.J."/>
            <person name="Nguyen M."/>
            <person name="Pham P.K."/>
            <person name="Cheuk R.F."/>
            <person name="Karlin-Newmann G."/>
            <person name="Liu S.X."/>
            <person name="Lam B."/>
            <person name="Sakano H."/>
            <person name="Wu T."/>
            <person name="Yu G."/>
            <person name="Miranda M."/>
            <person name="Quach H.L."/>
            <person name="Tripp M."/>
            <person name="Chang C.H."/>
            <person name="Lee J.M."/>
            <person name="Toriumi M.J."/>
            <person name="Chan M.M."/>
            <person name="Tang C.C."/>
            <person name="Onodera C.S."/>
            <person name="Deng J.M."/>
            <person name="Akiyama K."/>
            <person name="Ansari Y."/>
            <person name="Arakawa T."/>
            <person name="Banh J."/>
            <person name="Banno F."/>
            <person name="Bowser L."/>
            <person name="Brooks S.Y."/>
            <person name="Carninci P."/>
            <person name="Chao Q."/>
            <person name="Choy N."/>
            <person name="Enju A."/>
            <person name="Goldsmith A.D."/>
            <person name="Gurjal M."/>
            <person name="Hansen N.F."/>
            <person name="Hayashizaki Y."/>
            <person name="Johnson-Hopson C."/>
            <person name="Hsuan V.W."/>
            <person name="Iida K."/>
            <person name="Karnes M."/>
            <person name="Khan S."/>
            <person name="Koesema E."/>
            <person name="Ishida J."/>
            <person name="Jiang P.X."/>
            <person name="Jones T."/>
            <person name="Kawai J."/>
            <person name="Kamiya A."/>
            <person name="Meyers C."/>
            <person name="Nakajima M."/>
            <person name="Narusaka M."/>
            <person name="Seki M."/>
            <person name="Sakurai T."/>
            <person name="Satou M."/>
            <person name="Tamse R."/>
            <person name="Vaysberg M."/>
            <person name="Wallender E.K."/>
            <person name="Wong C."/>
            <person name="Yamamura Y."/>
            <person name="Yuan S."/>
            <person name="Shinozaki K."/>
            <person name="Davis R.W."/>
            <person name="Theologis A."/>
            <person name="Ecker J.R."/>
        </authorList>
    </citation>
    <scope>NUCLEOTIDE SEQUENCE [LARGE SCALE MRNA]</scope>
    <source>
        <strain>cv. Columbia</strain>
    </source>
</reference>
<reference key="4">
    <citation type="submission" date="2002-03" db="EMBL/GenBank/DDBJ databases">
        <title>Full-length cDNA from Arabidopsis thaliana.</title>
        <authorList>
            <person name="Brover V.V."/>
            <person name="Troukhan M.E."/>
            <person name="Alexandrov N.A."/>
            <person name="Lu Y.-P."/>
            <person name="Flavell R.B."/>
            <person name="Feldmann K.A."/>
        </authorList>
    </citation>
    <scope>NUCLEOTIDE SEQUENCE [LARGE SCALE MRNA]</scope>
</reference>
<reference key="5">
    <citation type="journal article" date="2011" name="Plant Cell">
        <title>The interconversion of UDP-L-arabinopyranose and UDP-L-arabinofuranose is indispensable for plant development in Arabidopsis.</title>
        <authorList>
            <person name="Rautengarten C."/>
            <person name="Ebert B."/>
            <person name="Herter T."/>
            <person name="Petzold C.J."/>
            <person name="Ishii T."/>
            <person name="Mukhopadhyay A."/>
            <person name="Usadel B."/>
            <person name="Scheller H.V."/>
        </authorList>
    </citation>
    <scope>SUBUNIT</scope>
    <scope>SUBCELLULAR LOCATION</scope>
    <scope>TISSUE SPECIFICITY</scope>
    <scope>IDENTIFICATION BY MASS SPECTROMETRY</scope>
</reference>
<gene>
    <name evidence="5" type="primary">RGP5</name>
    <name evidence="7" type="ordered locus">At5g16510</name>
    <name evidence="8" type="ORF">MQK4.26</name>
</gene>
<comment type="function">
    <text evidence="3">Probable UDP-L-arabinose mutase involved in the biosynthesis of cell wall non-cellulosic polysaccharides.</text>
</comment>
<comment type="catalytic activity">
    <reaction evidence="3">
        <text>UDP-beta-L-arabinofuranose = UDP-beta-L-arabinopyranose</text>
        <dbReference type="Rhea" id="RHEA:28350"/>
        <dbReference type="ChEBI" id="CHEBI:61457"/>
        <dbReference type="ChEBI" id="CHEBI:61463"/>
        <dbReference type="EC" id="5.4.99.30"/>
    </reaction>
</comment>
<comment type="cofactor">
    <cofactor evidence="2">
        <name>Mn(2+)</name>
        <dbReference type="ChEBI" id="CHEBI:29035"/>
    </cofactor>
    <cofactor evidence="2">
        <name>Mg(2+)</name>
        <dbReference type="ChEBI" id="CHEBI:18420"/>
    </cofactor>
</comment>
<comment type="subunit">
    <text evidence="4">Heteromers with RGP1 and RGP2.</text>
</comment>
<comment type="subcellular location">
    <subcellularLocation>
        <location evidence="4">Cytoplasm</location>
        <location evidence="4">Cytosol</location>
    </subcellularLocation>
    <subcellularLocation>
        <location evidence="4">Golgi apparatus</location>
    </subcellularLocation>
    <text>Localized predominantly in the cytosol.</text>
</comment>
<comment type="tissue specificity">
    <text evidence="4">Widely expressed at low levels.</text>
</comment>
<comment type="domain">
    <text evidence="2">The conserved DXD motif is involved in enzyme activity.</text>
</comment>
<comment type="PTM">
    <text evidence="3">Reversibly glycosylated in vitro by UDP-glucose, UDP-xylose and UDP-galactose, but not UDP-mannose.</text>
</comment>
<comment type="similarity">
    <text evidence="6">Belongs to the RGP family.</text>
</comment>
<sequence>MSLAEINKNEVDIVIGALNADLTQFLTSWRPFFSGFHLIVVKDPELKEELNIPEGFDVDVYSKTDMEKVVGASNSTMFSGYSCRYFGYLVSKKKYIVSIDDDCVPAKDPKGFLVDAVTQHVINLENPATPLFFNTLYDPYCEGADFVRGYPFSLRSGVPCAASCGLWLNLADLDAPTQALKTEKRNTAYVDAVMTVPAKAMLPISGINIAFNRELVGPALVPALRLAGEGKVRWETLEDVWCGMCLKHISDHLGYGVKTGLPYVWRNERGDAVESLRKKWEGMKLMEKSVPFFDSLKLPETALKVEDCVIELAKAVKEQLGSDDPAFTQAADAMVKWVQLWNSVNSSA</sequence>
<protein>
    <recommendedName>
        <fullName evidence="6">Probable UDP-arabinopyranose mutase 5</fullName>
        <ecNumber evidence="3">5.4.99.30</ecNumber>
    </recommendedName>
    <alternativeName>
        <fullName evidence="5">Reversibly glycosylated polypeptide 5</fullName>
        <shortName evidence="5">AtRGP5</shortName>
    </alternativeName>
    <alternativeName>
        <fullName evidence="6">UDP-L-arabinose mutase 5</fullName>
    </alternativeName>
</protein>